<gene>
    <name evidence="1" type="primary">xylA</name>
    <name type="ordered locus">Bmul_4207</name>
    <name type="ordered locus">BMULJ_04298</name>
</gene>
<sequence>MSYFEHIPAIRYEGPQSDNPLAYHHYDRTKRVLGKTLEEHLRIAVCYWHTFVWPGHDIFGQGAFRRPWQQPGDALERARQKADAAFEFFTKLGTPFYTFHDTDVAPEGDSLREYVDNFARMVDYLGERQQASGVRLLWGTANLFSHPRFAAGAATNPNPDVFAWAATQVRHALDATHRLGGENYVLWGGREGYETLLNTDLKREREQFARFLSMVVEHKHRIGFRGALLIEPKPQEPTKHQYDYDVATVHGFLTQYGLQDEIRVNIEANHATLAGHSFHHEIANAFALGVFGSVDANRGDPQNGWDTDQFPNSVEELTLAFYEILRHGGFTTGGMNFDAKVRRQSVDPEDLFYGHVGAIDVLALALERAAVLVENDRLEAMRRQRYAQWDDAFGRKILSGGYTLESLAADALARGVNPQHASGAQERLENIVNQAIYALR</sequence>
<evidence type="ECO:0000255" key="1">
    <source>
        <dbReference type="HAMAP-Rule" id="MF_00455"/>
    </source>
</evidence>
<protein>
    <recommendedName>
        <fullName evidence="1">Xylose isomerase</fullName>
        <ecNumber evidence="1">5.3.1.5</ecNumber>
    </recommendedName>
</protein>
<keyword id="KW-0119">Carbohydrate metabolism</keyword>
<keyword id="KW-0963">Cytoplasm</keyword>
<keyword id="KW-0413">Isomerase</keyword>
<keyword id="KW-0460">Magnesium</keyword>
<keyword id="KW-0479">Metal-binding</keyword>
<keyword id="KW-1185">Reference proteome</keyword>
<keyword id="KW-0859">Xylose metabolism</keyword>
<name>XYLA_BURM1</name>
<comment type="catalytic activity">
    <reaction evidence="1">
        <text>alpha-D-xylose = alpha-D-xylulofuranose</text>
        <dbReference type="Rhea" id="RHEA:22816"/>
        <dbReference type="ChEBI" id="CHEBI:28518"/>
        <dbReference type="ChEBI" id="CHEBI:188998"/>
        <dbReference type="EC" id="5.3.1.5"/>
    </reaction>
</comment>
<comment type="cofactor">
    <cofactor evidence="1">
        <name>Mg(2+)</name>
        <dbReference type="ChEBI" id="CHEBI:18420"/>
    </cofactor>
    <text evidence="1">Binds 2 magnesium ions per subunit.</text>
</comment>
<comment type="subunit">
    <text evidence="1">Homotetramer.</text>
</comment>
<comment type="subcellular location">
    <subcellularLocation>
        <location evidence="1">Cytoplasm</location>
    </subcellularLocation>
</comment>
<comment type="similarity">
    <text evidence="1">Belongs to the xylose isomerase family.</text>
</comment>
<feature type="chain" id="PRO_1000200284" description="Xylose isomerase">
    <location>
        <begin position="1"/>
        <end position="440"/>
    </location>
</feature>
<feature type="active site" evidence="1">
    <location>
        <position position="100"/>
    </location>
</feature>
<feature type="active site" evidence="1">
    <location>
        <position position="103"/>
    </location>
</feature>
<feature type="binding site" evidence="1">
    <location>
        <position position="231"/>
    </location>
    <ligand>
        <name>Mg(2+)</name>
        <dbReference type="ChEBI" id="CHEBI:18420"/>
        <label>1</label>
    </ligand>
</feature>
<feature type="binding site" evidence="1">
    <location>
        <position position="267"/>
    </location>
    <ligand>
        <name>Mg(2+)</name>
        <dbReference type="ChEBI" id="CHEBI:18420"/>
        <label>1</label>
    </ligand>
</feature>
<feature type="binding site" evidence="1">
    <location>
        <position position="267"/>
    </location>
    <ligand>
        <name>Mg(2+)</name>
        <dbReference type="ChEBI" id="CHEBI:18420"/>
        <label>2</label>
    </ligand>
</feature>
<feature type="binding site" evidence="1">
    <location>
        <position position="270"/>
    </location>
    <ligand>
        <name>Mg(2+)</name>
        <dbReference type="ChEBI" id="CHEBI:18420"/>
        <label>2</label>
    </ligand>
</feature>
<feature type="binding site" evidence="1">
    <location>
        <position position="295"/>
    </location>
    <ligand>
        <name>Mg(2+)</name>
        <dbReference type="ChEBI" id="CHEBI:18420"/>
        <label>1</label>
    </ligand>
</feature>
<feature type="binding site" evidence="1">
    <location>
        <position position="306"/>
    </location>
    <ligand>
        <name>Mg(2+)</name>
        <dbReference type="ChEBI" id="CHEBI:18420"/>
        <label>2</label>
    </ligand>
</feature>
<feature type="binding site" evidence="1">
    <location>
        <position position="308"/>
    </location>
    <ligand>
        <name>Mg(2+)</name>
        <dbReference type="ChEBI" id="CHEBI:18420"/>
        <label>2</label>
    </ligand>
</feature>
<feature type="binding site" evidence="1">
    <location>
        <position position="338"/>
    </location>
    <ligand>
        <name>Mg(2+)</name>
        <dbReference type="ChEBI" id="CHEBI:18420"/>
        <label>1</label>
    </ligand>
</feature>
<proteinExistence type="inferred from homology"/>
<accession>A9ARG7</accession>
<organism>
    <name type="scientific">Burkholderia multivorans (strain ATCC 17616 / 249)</name>
    <dbReference type="NCBI Taxonomy" id="395019"/>
    <lineage>
        <taxon>Bacteria</taxon>
        <taxon>Pseudomonadati</taxon>
        <taxon>Pseudomonadota</taxon>
        <taxon>Betaproteobacteria</taxon>
        <taxon>Burkholderiales</taxon>
        <taxon>Burkholderiaceae</taxon>
        <taxon>Burkholderia</taxon>
        <taxon>Burkholderia cepacia complex</taxon>
    </lineage>
</organism>
<reference key="1">
    <citation type="submission" date="2007-10" db="EMBL/GenBank/DDBJ databases">
        <title>Complete sequence of chromosome 2 of Burkholderia multivorans ATCC 17616.</title>
        <authorList>
            <person name="Copeland A."/>
            <person name="Lucas S."/>
            <person name="Lapidus A."/>
            <person name="Barry K."/>
            <person name="Glavina del Rio T."/>
            <person name="Dalin E."/>
            <person name="Tice H."/>
            <person name="Pitluck S."/>
            <person name="Chain P."/>
            <person name="Malfatti S."/>
            <person name="Shin M."/>
            <person name="Vergez L."/>
            <person name="Schmutz J."/>
            <person name="Larimer F."/>
            <person name="Land M."/>
            <person name="Hauser L."/>
            <person name="Kyrpides N."/>
            <person name="Kim E."/>
            <person name="Tiedje J."/>
            <person name="Richardson P."/>
        </authorList>
    </citation>
    <scope>NUCLEOTIDE SEQUENCE [LARGE SCALE GENOMIC DNA]</scope>
    <source>
        <strain>ATCC 17616 / 249</strain>
    </source>
</reference>
<reference key="2">
    <citation type="submission" date="2007-04" db="EMBL/GenBank/DDBJ databases">
        <title>Complete genome sequence of Burkholderia multivorans ATCC 17616.</title>
        <authorList>
            <person name="Ohtsubo Y."/>
            <person name="Yamashita A."/>
            <person name="Kurokawa K."/>
            <person name="Takami H."/>
            <person name="Yuhara S."/>
            <person name="Nishiyama E."/>
            <person name="Endo R."/>
            <person name="Miyazaki R."/>
            <person name="Ono A."/>
            <person name="Yano K."/>
            <person name="Ito M."/>
            <person name="Sota M."/>
            <person name="Yuji N."/>
            <person name="Hattori M."/>
            <person name="Tsuda M."/>
        </authorList>
    </citation>
    <scope>NUCLEOTIDE SEQUENCE [LARGE SCALE GENOMIC DNA]</scope>
    <source>
        <strain>ATCC 17616 / 249</strain>
    </source>
</reference>
<dbReference type="EC" id="5.3.1.5" evidence="1"/>
<dbReference type="EMBL" id="CP000869">
    <property type="protein sequence ID" value="ABX17888.1"/>
    <property type="molecule type" value="Genomic_DNA"/>
</dbReference>
<dbReference type="EMBL" id="AP009386">
    <property type="protein sequence ID" value="BAG46155.1"/>
    <property type="molecule type" value="Genomic_DNA"/>
</dbReference>
<dbReference type="RefSeq" id="WP_012216977.1">
    <property type="nucleotide sequence ID" value="NC_010086.1"/>
</dbReference>
<dbReference type="SMR" id="A9ARG7"/>
<dbReference type="STRING" id="395019.BMULJ_04298"/>
<dbReference type="GeneID" id="89566711"/>
<dbReference type="KEGG" id="bmj:BMULJ_04298"/>
<dbReference type="KEGG" id="bmu:Bmul_4207"/>
<dbReference type="eggNOG" id="COG2115">
    <property type="taxonomic scope" value="Bacteria"/>
</dbReference>
<dbReference type="HOGENOM" id="CLU_037261_1_0_4"/>
<dbReference type="Proteomes" id="UP000008815">
    <property type="component" value="Chromosome 2"/>
</dbReference>
<dbReference type="GO" id="GO:0005737">
    <property type="term" value="C:cytoplasm"/>
    <property type="evidence" value="ECO:0007669"/>
    <property type="project" value="UniProtKB-SubCell"/>
</dbReference>
<dbReference type="GO" id="GO:0000287">
    <property type="term" value="F:magnesium ion binding"/>
    <property type="evidence" value="ECO:0007669"/>
    <property type="project" value="UniProtKB-UniRule"/>
</dbReference>
<dbReference type="GO" id="GO:0009045">
    <property type="term" value="F:xylose isomerase activity"/>
    <property type="evidence" value="ECO:0007669"/>
    <property type="project" value="UniProtKB-UniRule"/>
</dbReference>
<dbReference type="GO" id="GO:0042732">
    <property type="term" value="P:D-xylose metabolic process"/>
    <property type="evidence" value="ECO:0007669"/>
    <property type="project" value="UniProtKB-UniRule"/>
</dbReference>
<dbReference type="FunFam" id="3.20.20.150:FF:000002">
    <property type="entry name" value="Xylose isomerase"/>
    <property type="match status" value="1"/>
</dbReference>
<dbReference type="Gene3D" id="3.20.20.150">
    <property type="entry name" value="Divalent-metal-dependent TIM barrel enzymes"/>
    <property type="match status" value="1"/>
</dbReference>
<dbReference type="HAMAP" id="MF_00455">
    <property type="entry name" value="Xylose_isom_A"/>
    <property type="match status" value="1"/>
</dbReference>
<dbReference type="InterPro" id="IPR036237">
    <property type="entry name" value="Xyl_isomerase-like_sf"/>
</dbReference>
<dbReference type="InterPro" id="IPR013452">
    <property type="entry name" value="Xylose_isom_bac"/>
</dbReference>
<dbReference type="InterPro" id="IPR001998">
    <property type="entry name" value="Xylose_isomerase"/>
</dbReference>
<dbReference type="NCBIfam" id="NF003998">
    <property type="entry name" value="PRK05474.1"/>
    <property type="match status" value="1"/>
</dbReference>
<dbReference type="NCBIfam" id="TIGR02630">
    <property type="entry name" value="xylose_isom_A"/>
    <property type="match status" value="1"/>
</dbReference>
<dbReference type="PANTHER" id="PTHR48408">
    <property type="match status" value="1"/>
</dbReference>
<dbReference type="PANTHER" id="PTHR48408:SF1">
    <property type="entry name" value="XYLOSE ISOMERASE"/>
    <property type="match status" value="1"/>
</dbReference>
<dbReference type="PRINTS" id="PR00688">
    <property type="entry name" value="XYLOSISMRASE"/>
</dbReference>
<dbReference type="SUPFAM" id="SSF51658">
    <property type="entry name" value="Xylose isomerase-like"/>
    <property type="match status" value="1"/>
</dbReference>
<dbReference type="PROSITE" id="PS51415">
    <property type="entry name" value="XYLOSE_ISOMERASE"/>
    <property type="match status" value="1"/>
</dbReference>